<organism>
    <name type="scientific">Microplitis demolitor bracovirus (isolate Webb)</name>
    <name type="common">MdBV</name>
    <dbReference type="NCBI Taxonomy" id="654919"/>
    <lineage>
        <taxon>Viruses</taxon>
        <taxon>Viruses incertae sedis</taxon>
        <taxon>Polydnaviriformidae</taxon>
        <taxon>Bracoviriform</taxon>
        <taxon>Microplitis demolitor bracovirus</taxon>
    </lineage>
</organism>
<feature type="chain" id="PRO_0000405385" description="Uncharacterized protein M3">
    <location>
        <begin position="1"/>
        <end position="110"/>
    </location>
</feature>
<accession>Q5I133</accession>
<reference key="1">
    <citation type="journal article" date="2006" name="Virology">
        <title>Polydnavirus genomes reflect their dual roles as mutualists and pathogens.</title>
        <authorList>
            <person name="Webb B.A."/>
            <person name="Strand M.R."/>
            <person name="Dickey S.E."/>
            <person name="Beck M.H."/>
            <person name="Hilgarth R.S."/>
            <person name="Barney W.E."/>
            <person name="Kadash K."/>
            <person name="Kroemer J.A."/>
            <person name="Lindstrom K.G."/>
            <person name="Rattanadechakul W."/>
            <person name="Shelby K.S."/>
            <person name="Thoetkiattikul H."/>
            <person name="Turnbull M.W."/>
            <person name="Witherell R.A."/>
        </authorList>
    </citation>
    <scope>NUCLEOTIDE SEQUENCE [GENOMIC DNA]</scope>
</reference>
<sequence>MSVILLNLKFLLCHYSPLIKKSMILNGKYHYICIAPREWEEYSSKNLKQLIVDSCKSHRQQTTCIHGAVTNIAGVSTKLEYYDLKLWMKKQGDNSAYPDQKDYFRMLLDL</sequence>
<organismHost>
    <name type="scientific">Microplitis demolitor</name>
    <name type="common">Parasitoid wasp</name>
    <dbReference type="NCBI Taxonomy" id="69319"/>
</organismHost>
<gene>
    <name type="primary">M3</name>
</gene>
<proteinExistence type="predicted"/>
<protein>
    <recommendedName>
        <fullName>Uncharacterized protein M3</fullName>
    </recommendedName>
</protein>
<dbReference type="EMBL" id="AY875688">
    <property type="protein sequence ID" value="AAW51799.1"/>
    <property type="molecule type" value="Genomic_DNA"/>
</dbReference>
<dbReference type="RefSeq" id="YP_239395.1">
    <property type="nucleotide sequence ID" value="NC_007038.1"/>
</dbReference>
<dbReference type="KEGG" id="vg:5075831"/>
<dbReference type="Proteomes" id="UP000008168">
    <property type="component" value="Genome"/>
</dbReference>
<name>YM3_MDBVW</name>
<keyword id="KW-1185">Reference proteome</keyword>